<keyword id="KW-0125">Carotenoid biosynthesis</keyword>
<keyword id="KW-0274">FAD</keyword>
<keyword id="KW-0285">Flavoprotein</keyword>
<keyword id="KW-0560">Oxidoreductase</keyword>
<keyword id="KW-0843">Virulence</keyword>
<gene>
    <name evidence="2" type="primary">crtP</name>
    <name type="ordered locus">SAR2646</name>
</gene>
<proteinExistence type="inferred from homology"/>
<comment type="function">
    <text evidence="2">Involved in the biosynthesis of the yellow-orange carotenoid staphyloxanthin, which plays a role in the virulence via its protective function against oxidative stress. Catalyzes the oxidation of the terminal methyl side group of 4,4'-diaponeurosporene to form 4,4'-diaponeurosporen-4-al.</text>
</comment>
<comment type="catalytic activity">
    <reaction evidence="2">
        <text>all-trans-4,4'-diaponeurosporene + 2 AH2 + 2 O2 = 4,4'-diaponeurosporenal + 2 A + 3 H2O</text>
        <dbReference type="Rhea" id="RHEA:56104"/>
        <dbReference type="ChEBI" id="CHEBI:13193"/>
        <dbReference type="ChEBI" id="CHEBI:15377"/>
        <dbReference type="ChEBI" id="CHEBI:15379"/>
        <dbReference type="ChEBI" id="CHEBI:17499"/>
        <dbReference type="ChEBI" id="CHEBI:62743"/>
        <dbReference type="ChEBI" id="CHEBI:79065"/>
    </reaction>
</comment>
<comment type="cofactor">
    <cofactor evidence="1">
        <name>FAD</name>
        <dbReference type="ChEBI" id="CHEBI:57692"/>
    </cofactor>
</comment>
<comment type="pathway">
    <text evidence="2">Carotenoid biosynthesis; staphyloxanthin biosynthesis; staphyloxanthin from farnesyl diphosphate: step 3/5.</text>
</comment>
<comment type="similarity">
    <text evidence="2">Belongs to the carotenoid/retinoid oxidoreductase family. CrtP subfamily.</text>
</comment>
<organism>
    <name type="scientific">Staphylococcus aureus (strain MRSA252)</name>
    <dbReference type="NCBI Taxonomy" id="282458"/>
    <lineage>
        <taxon>Bacteria</taxon>
        <taxon>Bacillati</taxon>
        <taxon>Bacillota</taxon>
        <taxon>Bacilli</taxon>
        <taxon>Bacillales</taxon>
        <taxon>Staphylococcaceae</taxon>
        <taxon>Staphylococcus</taxon>
    </lineage>
</organism>
<evidence type="ECO:0000250" key="1">
    <source>
        <dbReference type="UniProtKB" id="P21685"/>
    </source>
</evidence>
<evidence type="ECO:0000250" key="2">
    <source>
        <dbReference type="UniProtKB" id="Q2FV57"/>
    </source>
</evidence>
<evidence type="ECO:0000255" key="3"/>
<reference key="1">
    <citation type="journal article" date="2004" name="Proc. Natl. Acad. Sci. U.S.A.">
        <title>Complete genomes of two clinical Staphylococcus aureus strains: evidence for the rapid evolution of virulence and drug resistance.</title>
        <authorList>
            <person name="Holden M.T.G."/>
            <person name="Feil E.J."/>
            <person name="Lindsay J.A."/>
            <person name="Peacock S.J."/>
            <person name="Day N.P.J."/>
            <person name="Enright M.C."/>
            <person name="Foster T.J."/>
            <person name="Moore C.E."/>
            <person name="Hurst L."/>
            <person name="Atkin R."/>
            <person name="Barron A."/>
            <person name="Bason N."/>
            <person name="Bentley S.D."/>
            <person name="Chillingworth C."/>
            <person name="Chillingworth T."/>
            <person name="Churcher C."/>
            <person name="Clark L."/>
            <person name="Corton C."/>
            <person name="Cronin A."/>
            <person name="Doggett J."/>
            <person name="Dowd L."/>
            <person name="Feltwell T."/>
            <person name="Hance Z."/>
            <person name="Harris B."/>
            <person name="Hauser H."/>
            <person name="Holroyd S."/>
            <person name="Jagels K."/>
            <person name="James K.D."/>
            <person name="Lennard N."/>
            <person name="Line A."/>
            <person name="Mayes R."/>
            <person name="Moule S."/>
            <person name="Mungall K."/>
            <person name="Ormond D."/>
            <person name="Quail M.A."/>
            <person name="Rabbinowitsch E."/>
            <person name="Rutherford K.M."/>
            <person name="Sanders M."/>
            <person name="Sharp S."/>
            <person name="Simmonds M."/>
            <person name="Stevens K."/>
            <person name="Whitehead S."/>
            <person name="Barrell B.G."/>
            <person name="Spratt B.G."/>
            <person name="Parkhill J."/>
        </authorList>
    </citation>
    <scope>NUCLEOTIDE SEQUENCE [LARGE SCALE GENOMIC DNA]</scope>
    <source>
        <strain>MRSA252</strain>
    </source>
</reference>
<dbReference type="EC" id="1.14.99.-" evidence="2"/>
<dbReference type="EMBL" id="BX571856">
    <property type="protein sequence ID" value="CAG41623.1"/>
    <property type="molecule type" value="Genomic_DNA"/>
</dbReference>
<dbReference type="RefSeq" id="WP_000160442.1">
    <property type="nucleotide sequence ID" value="NC_002952.2"/>
</dbReference>
<dbReference type="SMR" id="Q6GDN5"/>
<dbReference type="KEGG" id="sar:SAR2646"/>
<dbReference type="HOGENOM" id="CLU_019722_2_1_9"/>
<dbReference type="UniPathway" id="UPA00029">
    <property type="reaction ID" value="UER00558"/>
</dbReference>
<dbReference type="Proteomes" id="UP000000596">
    <property type="component" value="Chromosome"/>
</dbReference>
<dbReference type="GO" id="GO:0016491">
    <property type="term" value="F:oxidoreductase activity"/>
    <property type="evidence" value="ECO:0007669"/>
    <property type="project" value="UniProtKB-KW"/>
</dbReference>
<dbReference type="GO" id="GO:0016117">
    <property type="term" value="P:carotenoid biosynthetic process"/>
    <property type="evidence" value="ECO:0007669"/>
    <property type="project" value="UniProtKB-KW"/>
</dbReference>
<dbReference type="Gene3D" id="3.50.50.60">
    <property type="entry name" value="FAD/NAD(P)-binding domain"/>
    <property type="match status" value="2"/>
</dbReference>
<dbReference type="InterPro" id="IPR002937">
    <property type="entry name" value="Amino_oxidase"/>
</dbReference>
<dbReference type="InterPro" id="IPR014105">
    <property type="entry name" value="Carotenoid/retinoid_OxRdtase"/>
</dbReference>
<dbReference type="InterPro" id="IPR036188">
    <property type="entry name" value="FAD/NAD-bd_sf"/>
</dbReference>
<dbReference type="NCBIfam" id="TIGR02734">
    <property type="entry name" value="crtI_fam"/>
    <property type="match status" value="1"/>
</dbReference>
<dbReference type="PANTHER" id="PTHR43734:SF7">
    <property type="entry name" value="4,4'-DIAPONEUROSPORENE OXYGENASE"/>
    <property type="match status" value="1"/>
</dbReference>
<dbReference type="PANTHER" id="PTHR43734">
    <property type="entry name" value="PHYTOENE DESATURASE"/>
    <property type="match status" value="1"/>
</dbReference>
<dbReference type="Pfam" id="PF01593">
    <property type="entry name" value="Amino_oxidase"/>
    <property type="match status" value="1"/>
</dbReference>
<dbReference type="SUPFAM" id="SSF51905">
    <property type="entry name" value="FAD/NAD(P)-binding domain"/>
    <property type="match status" value="1"/>
</dbReference>
<accession>Q6GDN5</accession>
<sequence>MTKHIIVIGGGLGGISAAIRMAQSGYSVSLYEQNNHIGGKVNRHESDDFGFDLGPSILTMPYIFEKLFEYSKKQMSDYVTIKRLPHQWRSFFPDGTTIDLYEGIKETGQHNAILSKQDIEELQNYLNYTRRIDRITEKGYFNYGLDTLSQIIKFHGPLNALINYDYVHTMQQAIDKRISNPYLRQMLGYFIKYVGSSSYDAPAVLSMLFHMQQEQGLWYVEGGIHHLANALEKLAREEGVTIHTGTRVDNIKTYERCVTGVRLDTGEFVKADYIISNMEVIPTYKYLLHLDTQRLNKLEREFEPASSGYVMHLGVACQYPQLAHHNFFFTENAYLNYQQVFHEKVLPDDPTIYLVNTNKTDHTQAPVGYENIKVLPHIPYIQDQPFTTEDYAKFRDKILDKLEKMGLTDLRKHIIYEDVWTPEDIEKNYRSNRGAIYGVVADKKKNKGFKFPKESQYFENLYFVGGSVNPGGGMPMVTLSGQQVADKINAREAKNRK</sequence>
<name>CRTP_STAAR</name>
<protein>
    <recommendedName>
        <fullName evidence="2">4,4'-diaponeurosporene oxygenase</fullName>
        <ecNumber evidence="2">1.14.99.-</ecNumber>
    </recommendedName>
    <alternativeName>
        <fullName evidence="2">4,4'-diaponeurosporene oxidase</fullName>
    </alternativeName>
    <alternativeName>
        <fullName evidence="2">Carotenoid oxidase</fullName>
    </alternativeName>
</protein>
<feature type="chain" id="PRO_0000285226" description="4,4'-diaponeurosporene oxygenase">
    <location>
        <begin position="1"/>
        <end position="497"/>
    </location>
</feature>
<feature type="binding site" evidence="3">
    <location>
        <begin position="7"/>
        <end position="19"/>
    </location>
    <ligand>
        <name>FAD</name>
        <dbReference type="ChEBI" id="CHEBI:57692"/>
    </ligand>
</feature>